<accession>A3PKR6</accession>
<dbReference type="EC" id="2.3.2.6" evidence="1"/>
<dbReference type="EMBL" id="CP000577">
    <property type="protein sequence ID" value="ABN76932.1"/>
    <property type="molecule type" value="Genomic_DNA"/>
</dbReference>
<dbReference type="RefSeq" id="WP_011841257.1">
    <property type="nucleotide sequence ID" value="NC_009049.1"/>
</dbReference>
<dbReference type="SMR" id="A3PKR6"/>
<dbReference type="KEGG" id="rsh:Rsph17029_1825"/>
<dbReference type="HOGENOM" id="CLU_075045_1_1_5"/>
<dbReference type="GO" id="GO:0005737">
    <property type="term" value="C:cytoplasm"/>
    <property type="evidence" value="ECO:0007669"/>
    <property type="project" value="UniProtKB-SubCell"/>
</dbReference>
<dbReference type="GO" id="GO:0008914">
    <property type="term" value="F:leucyl-tRNA--protein transferase activity"/>
    <property type="evidence" value="ECO:0007669"/>
    <property type="project" value="UniProtKB-UniRule"/>
</dbReference>
<dbReference type="GO" id="GO:0030163">
    <property type="term" value="P:protein catabolic process"/>
    <property type="evidence" value="ECO:0007669"/>
    <property type="project" value="UniProtKB-UniRule"/>
</dbReference>
<dbReference type="Gene3D" id="3.40.630.70">
    <property type="entry name" value="Leucyl/phenylalanyl-tRNA-protein transferase, C-terminal domain"/>
    <property type="match status" value="1"/>
</dbReference>
<dbReference type="HAMAP" id="MF_00688">
    <property type="entry name" value="Leu_Phe_trans"/>
    <property type="match status" value="1"/>
</dbReference>
<dbReference type="InterPro" id="IPR016181">
    <property type="entry name" value="Acyl_CoA_acyltransferase"/>
</dbReference>
<dbReference type="InterPro" id="IPR004616">
    <property type="entry name" value="Leu/Phe-tRNA_Trfase"/>
</dbReference>
<dbReference type="InterPro" id="IPR042203">
    <property type="entry name" value="Leu/Phe-tRNA_Trfase_C"/>
</dbReference>
<dbReference type="NCBIfam" id="TIGR00667">
    <property type="entry name" value="aat"/>
    <property type="match status" value="1"/>
</dbReference>
<dbReference type="PANTHER" id="PTHR30098">
    <property type="entry name" value="LEUCYL/PHENYLALANYL-TRNA--PROTEIN TRANSFERASE"/>
    <property type="match status" value="1"/>
</dbReference>
<dbReference type="PANTHER" id="PTHR30098:SF2">
    <property type="entry name" value="LEUCYL_PHENYLALANYL-TRNA--PROTEIN TRANSFERASE"/>
    <property type="match status" value="1"/>
</dbReference>
<dbReference type="Pfam" id="PF03588">
    <property type="entry name" value="Leu_Phe_trans"/>
    <property type="match status" value="1"/>
</dbReference>
<dbReference type="SUPFAM" id="SSF55729">
    <property type="entry name" value="Acyl-CoA N-acyltransferases (Nat)"/>
    <property type="match status" value="1"/>
</dbReference>
<name>LFTR_CERS1</name>
<comment type="function">
    <text evidence="1">Functions in the N-end rule pathway of protein degradation where it conjugates Leu, Phe and, less efficiently, Met from aminoacyl-tRNAs to the N-termini of proteins containing an N-terminal arginine or lysine.</text>
</comment>
<comment type="catalytic activity">
    <reaction evidence="1">
        <text>N-terminal L-lysyl-[protein] + L-leucyl-tRNA(Leu) = N-terminal L-leucyl-L-lysyl-[protein] + tRNA(Leu) + H(+)</text>
        <dbReference type="Rhea" id="RHEA:12340"/>
        <dbReference type="Rhea" id="RHEA-COMP:9613"/>
        <dbReference type="Rhea" id="RHEA-COMP:9622"/>
        <dbReference type="Rhea" id="RHEA-COMP:12670"/>
        <dbReference type="Rhea" id="RHEA-COMP:12671"/>
        <dbReference type="ChEBI" id="CHEBI:15378"/>
        <dbReference type="ChEBI" id="CHEBI:65249"/>
        <dbReference type="ChEBI" id="CHEBI:78442"/>
        <dbReference type="ChEBI" id="CHEBI:78494"/>
        <dbReference type="ChEBI" id="CHEBI:133043"/>
        <dbReference type="EC" id="2.3.2.6"/>
    </reaction>
</comment>
<comment type="catalytic activity">
    <reaction evidence="1">
        <text>N-terminal L-arginyl-[protein] + L-leucyl-tRNA(Leu) = N-terminal L-leucyl-L-arginyl-[protein] + tRNA(Leu) + H(+)</text>
        <dbReference type="Rhea" id="RHEA:50416"/>
        <dbReference type="Rhea" id="RHEA-COMP:9613"/>
        <dbReference type="Rhea" id="RHEA-COMP:9622"/>
        <dbReference type="Rhea" id="RHEA-COMP:12672"/>
        <dbReference type="Rhea" id="RHEA-COMP:12673"/>
        <dbReference type="ChEBI" id="CHEBI:15378"/>
        <dbReference type="ChEBI" id="CHEBI:64719"/>
        <dbReference type="ChEBI" id="CHEBI:78442"/>
        <dbReference type="ChEBI" id="CHEBI:78494"/>
        <dbReference type="ChEBI" id="CHEBI:133044"/>
        <dbReference type="EC" id="2.3.2.6"/>
    </reaction>
</comment>
<comment type="catalytic activity">
    <reaction evidence="1">
        <text>L-phenylalanyl-tRNA(Phe) + an N-terminal L-alpha-aminoacyl-[protein] = an N-terminal L-phenylalanyl-L-alpha-aminoacyl-[protein] + tRNA(Phe)</text>
        <dbReference type="Rhea" id="RHEA:43632"/>
        <dbReference type="Rhea" id="RHEA-COMP:9668"/>
        <dbReference type="Rhea" id="RHEA-COMP:9699"/>
        <dbReference type="Rhea" id="RHEA-COMP:10636"/>
        <dbReference type="Rhea" id="RHEA-COMP:10637"/>
        <dbReference type="ChEBI" id="CHEBI:78442"/>
        <dbReference type="ChEBI" id="CHEBI:78531"/>
        <dbReference type="ChEBI" id="CHEBI:78597"/>
        <dbReference type="ChEBI" id="CHEBI:83561"/>
        <dbReference type="EC" id="2.3.2.6"/>
    </reaction>
</comment>
<comment type="subcellular location">
    <subcellularLocation>
        <location evidence="1">Cytoplasm</location>
    </subcellularLocation>
</comment>
<comment type="similarity">
    <text evidence="1">Belongs to the L/F-transferase family.</text>
</comment>
<feature type="chain" id="PRO_0000304352" description="Leucyl/phenylalanyl-tRNA--protein transferase">
    <location>
        <begin position="1"/>
        <end position="214"/>
    </location>
</feature>
<sequence>MKPPALTPRLLLRAYALGIFPMAESRDDPEIHWIDPRHRGIFPLDGFHISRSLARRIRRMDWRVSVDEDFAATVEACADREETWINPTIFRLYVELHALGHAHSLEVREGETLVGGVYGVTLGRAFFGESMFSHRTDASKVALAFLIDRLRAGGFTLFDTQFLTPHLASLGAIEIRRSDYHQRLTVALEGNASFTPEGYWADPASVVQRNSQTS</sequence>
<gene>
    <name evidence="1" type="primary">aat</name>
    <name type="ordered locus">Rsph17029_1825</name>
</gene>
<organism>
    <name type="scientific">Cereibacter sphaeroides (strain ATCC 17029 / ATH 2.4.9)</name>
    <name type="common">Rhodobacter sphaeroides</name>
    <dbReference type="NCBI Taxonomy" id="349101"/>
    <lineage>
        <taxon>Bacteria</taxon>
        <taxon>Pseudomonadati</taxon>
        <taxon>Pseudomonadota</taxon>
        <taxon>Alphaproteobacteria</taxon>
        <taxon>Rhodobacterales</taxon>
        <taxon>Paracoccaceae</taxon>
        <taxon>Cereibacter</taxon>
    </lineage>
</organism>
<protein>
    <recommendedName>
        <fullName evidence="1">Leucyl/phenylalanyl-tRNA--protein transferase</fullName>
        <ecNumber evidence="1">2.3.2.6</ecNumber>
    </recommendedName>
    <alternativeName>
        <fullName evidence="1">L/F-transferase</fullName>
    </alternativeName>
    <alternativeName>
        <fullName evidence="1">Leucyltransferase</fullName>
    </alternativeName>
    <alternativeName>
        <fullName evidence="1">Phenyalanyltransferase</fullName>
    </alternativeName>
</protein>
<evidence type="ECO:0000255" key="1">
    <source>
        <dbReference type="HAMAP-Rule" id="MF_00688"/>
    </source>
</evidence>
<reference key="1">
    <citation type="submission" date="2007-02" db="EMBL/GenBank/DDBJ databases">
        <title>Complete sequence of chromosome 1 of Rhodobacter sphaeroides ATCC 17029.</title>
        <authorList>
            <person name="Copeland A."/>
            <person name="Lucas S."/>
            <person name="Lapidus A."/>
            <person name="Barry K."/>
            <person name="Detter J.C."/>
            <person name="Glavina del Rio T."/>
            <person name="Hammon N."/>
            <person name="Israni S."/>
            <person name="Dalin E."/>
            <person name="Tice H."/>
            <person name="Pitluck S."/>
            <person name="Kiss H."/>
            <person name="Brettin T."/>
            <person name="Bruce D."/>
            <person name="Han C."/>
            <person name="Tapia R."/>
            <person name="Gilna P."/>
            <person name="Schmutz J."/>
            <person name="Larimer F."/>
            <person name="Land M."/>
            <person name="Hauser L."/>
            <person name="Kyrpides N."/>
            <person name="Mikhailova N."/>
            <person name="Richardson P."/>
            <person name="Mackenzie C."/>
            <person name="Choudhary M."/>
            <person name="Donohue T.J."/>
            <person name="Kaplan S."/>
        </authorList>
    </citation>
    <scope>NUCLEOTIDE SEQUENCE [LARGE SCALE GENOMIC DNA]</scope>
    <source>
        <strain>ATCC 17029 / ATH 2.4.9</strain>
    </source>
</reference>
<proteinExistence type="inferred from homology"/>
<keyword id="KW-0012">Acyltransferase</keyword>
<keyword id="KW-0963">Cytoplasm</keyword>
<keyword id="KW-0808">Transferase</keyword>